<keyword id="KW-0479">Metal-binding</keyword>
<keyword id="KW-1185">Reference proteome</keyword>
<keyword id="KW-0687">Ribonucleoprotein</keyword>
<keyword id="KW-0689">Ribosomal protein</keyword>
<keyword id="KW-0694">RNA-binding</keyword>
<keyword id="KW-0699">rRNA-binding</keyword>
<keyword id="KW-0862">Zinc</keyword>
<keyword id="KW-0863">Zinc-finger</keyword>
<organism>
    <name type="scientific">Methanosphaerula palustris (strain ATCC BAA-1556 / DSM 19958 / E1-9c)</name>
    <dbReference type="NCBI Taxonomy" id="521011"/>
    <lineage>
        <taxon>Archaea</taxon>
        <taxon>Methanobacteriati</taxon>
        <taxon>Methanobacteriota</taxon>
        <taxon>Stenosarchaea group</taxon>
        <taxon>Methanomicrobia</taxon>
        <taxon>Methanomicrobiales</taxon>
        <taxon>Methanoregulaceae</taxon>
        <taxon>Methanosphaerula</taxon>
    </lineage>
</organism>
<feature type="chain" id="PRO_1000146607" description="Large ribosomal subunit protein eL37">
    <location>
        <begin position="1"/>
        <end position="60"/>
    </location>
</feature>
<feature type="zinc finger region" description="C4-type" evidence="1">
    <location>
        <begin position="19"/>
        <end position="37"/>
    </location>
</feature>
<feature type="binding site" evidence="1">
    <location>
        <position position="19"/>
    </location>
    <ligand>
        <name>Zn(2+)</name>
        <dbReference type="ChEBI" id="CHEBI:29105"/>
    </ligand>
</feature>
<feature type="binding site" evidence="1">
    <location>
        <position position="22"/>
    </location>
    <ligand>
        <name>Zn(2+)</name>
        <dbReference type="ChEBI" id="CHEBI:29105"/>
    </ligand>
</feature>
<feature type="binding site" evidence="1">
    <location>
        <position position="34"/>
    </location>
    <ligand>
        <name>Zn(2+)</name>
        <dbReference type="ChEBI" id="CHEBI:29105"/>
    </ligand>
</feature>
<feature type="binding site" evidence="1">
    <location>
        <position position="37"/>
    </location>
    <ligand>
        <name>Zn(2+)</name>
        <dbReference type="ChEBI" id="CHEBI:29105"/>
    </ligand>
</feature>
<proteinExistence type="inferred from homology"/>
<protein>
    <recommendedName>
        <fullName evidence="1">Large ribosomal subunit protein eL37</fullName>
    </recommendedName>
    <alternativeName>
        <fullName evidence="2">50S ribosomal protein L37e</fullName>
    </alternativeName>
</protein>
<comment type="function">
    <text evidence="1">Binds to the 23S rRNA.</text>
</comment>
<comment type="cofactor">
    <cofactor evidence="1">
        <name>Zn(2+)</name>
        <dbReference type="ChEBI" id="CHEBI:29105"/>
    </cofactor>
    <text evidence="1">Binds 1 zinc ion per subunit.</text>
</comment>
<comment type="similarity">
    <text evidence="1">Belongs to the eukaryotic ribosomal protein eL37 family.</text>
</comment>
<sequence length="60" mass="6810">MSKGTPSMGKRNKKTHIACRRCGSISYHARHKVCSACGFGRTSKLRSYKWTTKRSKIPTH</sequence>
<dbReference type="EMBL" id="CP001338">
    <property type="protein sequence ID" value="ACL15769.1"/>
    <property type="molecule type" value="Genomic_DNA"/>
</dbReference>
<dbReference type="RefSeq" id="WP_012617088.1">
    <property type="nucleotide sequence ID" value="NC_011832.1"/>
</dbReference>
<dbReference type="SMR" id="B8GJW5"/>
<dbReference type="STRING" id="521011.Mpal_0395"/>
<dbReference type="GeneID" id="32154874"/>
<dbReference type="KEGG" id="mpl:Mpal_0395"/>
<dbReference type="eggNOG" id="arCOG04126">
    <property type="taxonomic scope" value="Archaea"/>
</dbReference>
<dbReference type="HOGENOM" id="CLU_208825_0_0_2"/>
<dbReference type="OrthoDB" id="5619at2157"/>
<dbReference type="Proteomes" id="UP000002457">
    <property type="component" value="Chromosome"/>
</dbReference>
<dbReference type="GO" id="GO:0022625">
    <property type="term" value="C:cytosolic large ribosomal subunit"/>
    <property type="evidence" value="ECO:0007669"/>
    <property type="project" value="TreeGrafter"/>
</dbReference>
<dbReference type="GO" id="GO:0019843">
    <property type="term" value="F:rRNA binding"/>
    <property type="evidence" value="ECO:0007669"/>
    <property type="project" value="UniProtKB-KW"/>
</dbReference>
<dbReference type="GO" id="GO:0003735">
    <property type="term" value="F:structural constituent of ribosome"/>
    <property type="evidence" value="ECO:0007669"/>
    <property type="project" value="InterPro"/>
</dbReference>
<dbReference type="GO" id="GO:0008270">
    <property type="term" value="F:zinc ion binding"/>
    <property type="evidence" value="ECO:0007669"/>
    <property type="project" value="UniProtKB-UniRule"/>
</dbReference>
<dbReference type="GO" id="GO:0006412">
    <property type="term" value="P:translation"/>
    <property type="evidence" value="ECO:0007669"/>
    <property type="project" value="UniProtKB-UniRule"/>
</dbReference>
<dbReference type="FunFam" id="2.20.25.30:FF:000003">
    <property type="entry name" value="50S ribosomal protein L37e"/>
    <property type="match status" value="1"/>
</dbReference>
<dbReference type="Gene3D" id="2.20.25.30">
    <property type="match status" value="1"/>
</dbReference>
<dbReference type="HAMAP" id="MF_00547">
    <property type="entry name" value="Ribosomal_eL37"/>
    <property type="match status" value="1"/>
</dbReference>
<dbReference type="InterPro" id="IPR001569">
    <property type="entry name" value="Ribosomal_eL37"/>
</dbReference>
<dbReference type="InterPro" id="IPR011331">
    <property type="entry name" value="Ribosomal_eL37/eL43"/>
</dbReference>
<dbReference type="InterPro" id="IPR018267">
    <property type="entry name" value="Ribosomal_eL37_CS"/>
</dbReference>
<dbReference type="InterPro" id="IPR011332">
    <property type="entry name" value="Ribosomal_zn-bd"/>
</dbReference>
<dbReference type="NCBIfam" id="NF003214">
    <property type="entry name" value="PRK04179.1"/>
    <property type="match status" value="1"/>
</dbReference>
<dbReference type="PANTHER" id="PTHR10768">
    <property type="entry name" value="60S RIBOSOMAL PROTEIN L37"/>
    <property type="match status" value="1"/>
</dbReference>
<dbReference type="PANTHER" id="PTHR10768:SF0">
    <property type="entry name" value="RIBOSOMAL PROTEIN L37"/>
    <property type="match status" value="1"/>
</dbReference>
<dbReference type="Pfam" id="PF01907">
    <property type="entry name" value="Ribosomal_L37e"/>
    <property type="match status" value="1"/>
</dbReference>
<dbReference type="SUPFAM" id="SSF57829">
    <property type="entry name" value="Zn-binding ribosomal proteins"/>
    <property type="match status" value="1"/>
</dbReference>
<dbReference type="PROSITE" id="PS01077">
    <property type="entry name" value="RIBOSOMAL_L37E"/>
    <property type="match status" value="1"/>
</dbReference>
<reference key="1">
    <citation type="journal article" date="2015" name="Genome Announc.">
        <title>Complete Genome Sequence of Methanosphaerula palustris E1-9CT, a Hydrogenotrophic Methanogen Isolated from a Minerotrophic Fen Peatland.</title>
        <authorList>
            <person name="Cadillo-Quiroz H."/>
            <person name="Browne P."/>
            <person name="Kyrpides N."/>
            <person name="Woyke T."/>
            <person name="Goodwin L."/>
            <person name="Detter C."/>
            <person name="Yavitt J.B."/>
            <person name="Zinder S.H."/>
        </authorList>
    </citation>
    <scope>NUCLEOTIDE SEQUENCE [LARGE SCALE GENOMIC DNA]</scope>
    <source>
        <strain>ATCC BAA-1556 / DSM 19958 / E1-9c</strain>
    </source>
</reference>
<evidence type="ECO:0000255" key="1">
    <source>
        <dbReference type="HAMAP-Rule" id="MF_00547"/>
    </source>
</evidence>
<evidence type="ECO:0000305" key="2"/>
<name>RL37_METPE</name>
<accession>B8GJW5</accession>
<gene>
    <name evidence="1" type="primary">rpl37e</name>
    <name type="ordered locus">Mpal_0395</name>
</gene>